<name>RL15_CHRVO</name>
<organism>
    <name type="scientific">Chromobacterium violaceum (strain ATCC 12472 / DSM 30191 / JCM 1249 / CCUG 213 / NBRC 12614 / NCIMB 9131 / NCTC 9757 / MK)</name>
    <dbReference type="NCBI Taxonomy" id="243365"/>
    <lineage>
        <taxon>Bacteria</taxon>
        <taxon>Pseudomonadati</taxon>
        <taxon>Pseudomonadota</taxon>
        <taxon>Betaproteobacteria</taxon>
        <taxon>Neisseriales</taxon>
        <taxon>Chromobacteriaceae</taxon>
        <taxon>Chromobacterium</taxon>
    </lineage>
</organism>
<evidence type="ECO:0000255" key="1">
    <source>
        <dbReference type="HAMAP-Rule" id="MF_01341"/>
    </source>
</evidence>
<evidence type="ECO:0000256" key="2">
    <source>
        <dbReference type="SAM" id="MobiDB-lite"/>
    </source>
</evidence>
<evidence type="ECO:0000305" key="3"/>
<sequence>MLLNTVQPGVGAKHAKRRVGRGIGSGLGKTCGRGHKGQKSRAGGFHKVGFEGGQMPLQRRLPKRGFKSLTARFVCEVRLSELNLLPVDEIDLLALKQAGLVAAQAQVAKVVLSGKVERAVKLRGISVTAGARAAIEAAGGSIE</sequence>
<accession>Q7NQH1</accession>
<dbReference type="EMBL" id="AE016825">
    <property type="protein sequence ID" value="AAQ61827.1"/>
    <property type="molecule type" value="Genomic_DNA"/>
</dbReference>
<dbReference type="RefSeq" id="WP_011137714.1">
    <property type="nucleotide sequence ID" value="NC_005085.1"/>
</dbReference>
<dbReference type="SMR" id="Q7NQH1"/>
<dbReference type="STRING" id="243365.CV_4167"/>
<dbReference type="GeneID" id="66366361"/>
<dbReference type="KEGG" id="cvi:CV_4167"/>
<dbReference type="eggNOG" id="COG0200">
    <property type="taxonomic scope" value="Bacteria"/>
</dbReference>
<dbReference type="HOGENOM" id="CLU_055188_4_2_4"/>
<dbReference type="OrthoDB" id="9810293at2"/>
<dbReference type="Proteomes" id="UP000001424">
    <property type="component" value="Chromosome"/>
</dbReference>
<dbReference type="GO" id="GO:0022625">
    <property type="term" value="C:cytosolic large ribosomal subunit"/>
    <property type="evidence" value="ECO:0007669"/>
    <property type="project" value="TreeGrafter"/>
</dbReference>
<dbReference type="GO" id="GO:0019843">
    <property type="term" value="F:rRNA binding"/>
    <property type="evidence" value="ECO:0007669"/>
    <property type="project" value="UniProtKB-UniRule"/>
</dbReference>
<dbReference type="GO" id="GO:0003735">
    <property type="term" value="F:structural constituent of ribosome"/>
    <property type="evidence" value="ECO:0007669"/>
    <property type="project" value="InterPro"/>
</dbReference>
<dbReference type="GO" id="GO:0006412">
    <property type="term" value="P:translation"/>
    <property type="evidence" value="ECO:0007669"/>
    <property type="project" value="UniProtKB-UniRule"/>
</dbReference>
<dbReference type="Gene3D" id="3.100.10.10">
    <property type="match status" value="1"/>
</dbReference>
<dbReference type="HAMAP" id="MF_01341">
    <property type="entry name" value="Ribosomal_uL15"/>
    <property type="match status" value="1"/>
</dbReference>
<dbReference type="InterPro" id="IPR030878">
    <property type="entry name" value="Ribosomal_uL15"/>
</dbReference>
<dbReference type="InterPro" id="IPR021131">
    <property type="entry name" value="Ribosomal_uL15/eL18"/>
</dbReference>
<dbReference type="InterPro" id="IPR036227">
    <property type="entry name" value="Ribosomal_uL15/eL18_sf"/>
</dbReference>
<dbReference type="InterPro" id="IPR005749">
    <property type="entry name" value="Ribosomal_uL15_bac-type"/>
</dbReference>
<dbReference type="InterPro" id="IPR001196">
    <property type="entry name" value="Ribosomal_uL15_CS"/>
</dbReference>
<dbReference type="NCBIfam" id="TIGR01071">
    <property type="entry name" value="rplO_bact"/>
    <property type="match status" value="1"/>
</dbReference>
<dbReference type="PANTHER" id="PTHR12934">
    <property type="entry name" value="50S RIBOSOMAL PROTEIN L15"/>
    <property type="match status" value="1"/>
</dbReference>
<dbReference type="PANTHER" id="PTHR12934:SF11">
    <property type="entry name" value="LARGE RIBOSOMAL SUBUNIT PROTEIN UL15M"/>
    <property type="match status" value="1"/>
</dbReference>
<dbReference type="Pfam" id="PF00828">
    <property type="entry name" value="Ribosomal_L27A"/>
    <property type="match status" value="1"/>
</dbReference>
<dbReference type="SUPFAM" id="SSF52080">
    <property type="entry name" value="Ribosomal proteins L15p and L18e"/>
    <property type="match status" value="1"/>
</dbReference>
<dbReference type="PROSITE" id="PS00475">
    <property type="entry name" value="RIBOSOMAL_L15"/>
    <property type="match status" value="1"/>
</dbReference>
<feature type="chain" id="PRO_0000104704" description="Large ribosomal subunit protein uL15">
    <location>
        <begin position="1"/>
        <end position="143"/>
    </location>
</feature>
<feature type="region of interest" description="Disordered" evidence="2">
    <location>
        <begin position="1"/>
        <end position="45"/>
    </location>
</feature>
<feature type="compositionally biased region" description="Gly residues" evidence="2">
    <location>
        <begin position="21"/>
        <end position="31"/>
    </location>
</feature>
<comment type="function">
    <text evidence="1">Binds to the 23S rRNA.</text>
</comment>
<comment type="subunit">
    <text evidence="1">Part of the 50S ribosomal subunit.</text>
</comment>
<comment type="similarity">
    <text evidence="1">Belongs to the universal ribosomal protein uL15 family.</text>
</comment>
<protein>
    <recommendedName>
        <fullName evidence="1">Large ribosomal subunit protein uL15</fullName>
    </recommendedName>
    <alternativeName>
        <fullName evidence="3">50S ribosomal protein L15</fullName>
    </alternativeName>
</protein>
<gene>
    <name evidence="1" type="primary">rplO</name>
    <name type="ordered locus">CV_4167</name>
</gene>
<proteinExistence type="inferred from homology"/>
<keyword id="KW-1185">Reference proteome</keyword>
<keyword id="KW-0687">Ribonucleoprotein</keyword>
<keyword id="KW-0689">Ribosomal protein</keyword>
<keyword id="KW-0694">RNA-binding</keyword>
<keyword id="KW-0699">rRNA-binding</keyword>
<reference key="1">
    <citation type="journal article" date="2003" name="Proc. Natl. Acad. Sci. U.S.A.">
        <title>The complete genome sequence of Chromobacterium violaceum reveals remarkable and exploitable bacterial adaptability.</title>
        <authorList>
            <person name="Vasconcelos A.T.R."/>
            <person name="de Almeida D.F."/>
            <person name="Hungria M."/>
            <person name="Guimaraes C.T."/>
            <person name="Antonio R.V."/>
            <person name="Almeida F.C."/>
            <person name="de Almeida L.G.P."/>
            <person name="de Almeida R."/>
            <person name="Alves-Gomes J.A."/>
            <person name="Andrade E.M."/>
            <person name="Araripe J."/>
            <person name="de Araujo M.F.F."/>
            <person name="Astolfi-Filho S."/>
            <person name="Azevedo V."/>
            <person name="Baptista A.J."/>
            <person name="Bataus L.A.M."/>
            <person name="Batista J.S."/>
            <person name="Belo A."/>
            <person name="van den Berg C."/>
            <person name="Bogo M."/>
            <person name="Bonatto S."/>
            <person name="Bordignon J."/>
            <person name="Brigido M.M."/>
            <person name="Brito C.A."/>
            <person name="Brocchi M."/>
            <person name="Burity H.A."/>
            <person name="Camargo A.A."/>
            <person name="Cardoso D.D.P."/>
            <person name="Carneiro N.P."/>
            <person name="Carraro D.M."/>
            <person name="Carvalho C.M.B."/>
            <person name="Cascardo J.C.M."/>
            <person name="Cavada B.S."/>
            <person name="Chueire L.M.O."/>
            <person name="Creczynski-Pasa T.B."/>
            <person name="Cunha-Junior N.C."/>
            <person name="Fagundes N."/>
            <person name="Falcao C.L."/>
            <person name="Fantinatti F."/>
            <person name="Farias I.P."/>
            <person name="Felipe M.S.S."/>
            <person name="Ferrari L.P."/>
            <person name="Ferro J.A."/>
            <person name="Ferro M.I.T."/>
            <person name="Franco G.R."/>
            <person name="Freitas N.S.A."/>
            <person name="Furlan L.R."/>
            <person name="Gazzinelli R.T."/>
            <person name="Gomes E.A."/>
            <person name="Goncalves P.R."/>
            <person name="Grangeiro T.B."/>
            <person name="Grattapaglia D."/>
            <person name="Grisard E.C."/>
            <person name="Hanna E.S."/>
            <person name="Jardim S.N."/>
            <person name="Laurino J."/>
            <person name="Leoi L.C.T."/>
            <person name="Lima L.F.A."/>
            <person name="Loureiro M.F."/>
            <person name="Lyra M.C.C.P."/>
            <person name="Madeira H.M.F."/>
            <person name="Manfio G.P."/>
            <person name="Maranhao A.Q."/>
            <person name="Martins W.S."/>
            <person name="di Mauro S.M.Z."/>
            <person name="de Medeiros S.R.B."/>
            <person name="Meissner R.V."/>
            <person name="Moreira M.A.M."/>
            <person name="Nascimento F.F."/>
            <person name="Nicolas M.F."/>
            <person name="Oliveira J.G."/>
            <person name="Oliveira S.C."/>
            <person name="Paixao R.F.C."/>
            <person name="Parente J.A."/>
            <person name="Pedrosa F.O."/>
            <person name="Pena S.D.J."/>
            <person name="Pereira J.O."/>
            <person name="Pereira M."/>
            <person name="Pinto L.S.R.C."/>
            <person name="Pinto L.S."/>
            <person name="Porto J.I.R."/>
            <person name="Potrich D.P."/>
            <person name="Ramalho-Neto C.E."/>
            <person name="Reis A.M.M."/>
            <person name="Rigo L.U."/>
            <person name="Rondinelli E."/>
            <person name="Santos E.B.P."/>
            <person name="Santos F.R."/>
            <person name="Schneider M.P.C."/>
            <person name="Seuanez H.N."/>
            <person name="Silva A.M.R."/>
            <person name="da Silva A.L.C."/>
            <person name="Silva D.W."/>
            <person name="Silva R."/>
            <person name="Simoes I.C."/>
            <person name="Simon D."/>
            <person name="Soares C.M.A."/>
            <person name="Soares R.B.A."/>
            <person name="Souza E.M."/>
            <person name="Souza K.R.L."/>
            <person name="Souza R.C."/>
            <person name="Steffens M.B.R."/>
            <person name="Steindel M."/>
            <person name="Teixeira S.R."/>
            <person name="Urmenyi T."/>
            <person name="Vettore A."/>
            <person name="Wassem R."/>
            <person name="Zaha A."/>
            <person name="Simpson A.J.G."/>
        </authorList>
    </citation>
    <scope>NUCLEOTIDE SEQUENCE [LARGE SCALE GENOMIC DNA]</scope>
    <source>
        <strain>ATCC 12472 / DSM 30191 / JCM 1249 / CCUG 213 / NBRC 12614 / NCIMB 9131 / NCTC 9757 / MK</strain>
    </source>
</reference>